<comment type="function">
    <text evidence="1">Probably involved in ribonucleotide reductase function.</text>
</comment>
<comment type="similarity">
    <text evidence="1">Belongs to the NrdI family.</text>
</comment>
<gene>
    <name evidence="1" type="primary">nrdI</name>
    <name type="ordered locus">SeAg_B2923</name>
</gene>
<dbReference type="EMBL" id="CP001138">
    <property type="protein sequence ID" value="ACH51438.1"/>
    <property type="molecule type" value="Genomic_DNA"/>
</dbReference>
<dbReference type="RefSeq" id="WP_001275401.1">
    <property type="nucleotide sequence ID" value="NC_011149.1"/>
</dbReference>
<dbReference type="SMR" id="B5F333"/>
<dbReference type="KEGG" id="sea:SeAg_B2923"/>
<dbReference type="HOGENOM" id="CLU_114845_0_0_6"/>
<dbReference type="Proteomes" id="UP000008819">
    <property type="component" value="Chromosome"/>
</dbReference>
<dbReference type="GO" id="GO:0010181">
    <property type="term" value="F:FMN binding"/>
    <property type="evidence" value="ECO:0007669"/>
    <property type="project" value="InterPro"/>
</dbReference>
<dbReference type="GO" id="GO:0036211">
    <property type="term" value="P:protein modification process"/>
    <property type="evidence" value="ECO:0007669"/>
    <property type="project" value="InterPro"/>
</dbReference>
<dbReference type="FunFam" id="3.40.50.360:FF:000005">
    <property type="entry name" value="Protein NrdI"/>
    <property type="match status" value="1"/>
</dbReference>
<dbReference type="Gene3D" id="3.40.50.360">
    <property type="match status" value="1"/>
</dbReference>
<dbReference type="HAMAP" id="MF_00128">
    <property type="entry name" value="NrdI"/>
    <property type="match status" value="1"/>
</dbReference>
<dbReference type="InterPro" id="IPR029039">
    <property type="entry name" value="Flavoprotein-like_sf"/>
</dbReference>
<dbReference type="InterPro" id="IPR020852">
    <property type="entry name" value="RNR_Ib_NrdI_bac"/>
</dbReference>
<dbReference type="InterPro" id="IPR004465">
    <property type="entry name" value="RNR_NrdI"/>
</dbReference>
<dbReference type="NCBIfam" id="TIGR00333">
    <property type="entry name" value="nrdI"/>
    <property type="match status" value="1"/>
</dbReference>
<dbReference type="PANTHER" id="PTHR37297">
    <property type="entry name" value="PROTEIN NRDI"/>
    <property type="match status" value="1"/>
</dbReference>
<dbReference type="PANTHER" id="PTHR37297:SF1">
    <property type="entry name" value="PROTEIN NRDI"/>
    <property type="match status" value="1"/>
</dbReference>
<dbReference type="Pfam" id="PF07972">
    <property type="entry name" value="Flavodoxin_NdrI"/>
    <property type="match status" value="1"/>
</dbReference>
<dbReference type="PIRSF" id="PIRSF005087">
    <property type="entry name" value="NrdI"/>
    <property type="match status" value="1"/>
</dbReference>
<dbReference type="SUPFAM" id="SSF52218">
    <property type="entry name" value="Flavoproteins"/>
    <property type="match status" value="1"/>
</dbReference>
<proteinExistence type="inferred from homology"/>
<name>NRDI_SALA4</name>
<organism>
    <name type="scientific">Salmonella agona (strain SL483)</name>
    <dbReference type="NCBI Taxonomy" id="454166"/>
    <lineage>
        <taxon>Bacteria</taxon>
        <taxon>Pseudomonadati</taxon>
        <taxon>Pseudomonadota</taxon>
        <taxon>Gammaproteobacteria</taxon>
        <taxon>Enterobacterales</taxon>
        <taxon>Enterobacteriaceae</taxon>
        <taxon>Salmonella</taxon>
    </lineage>
</organism>
<evidence type="ECO:0000255" key="1">
    <source>
        <dbReference type="HAMAP-Rule" id="MF_00128"/>
    </source>
</evidence>
<sequence length="136" mass="15324">MSALVYFSSSSENTHRFMQRLGLPATRIPLNERERIQVDEPYILVVPSYGGGGMAGAVPRQVIRFLNDEHNRARIRGVIASGNRNFGDAWGCAGDVIAQKCGVPWLYRFELMGTQRDIDNVRKGVNEFWQQLPRSA</sequence>
<protein>
    <recommendedName>
        <fullName evidence="1">Protein NrdI</fullName>
    </recommendedName>
</protein>
<accession>B5F333</accession>
<feature type="chain" id="PRO_1000095627" description="Protein NrdI">
    <location>
        <begin position="1"/>
        <end position="136"/>
    </location>
</feature>
<reference key="1">
    <citation type="journal article" date="2011" name="J. Bacteriol.">
        <title>Comparative genomics of 28 Salmonella enterica isolates: evidence for CRISPR-mediated adaptive sublineage evolution.</title>
        <authorList>
            <person name="Fricke W.F."/>
            <person name="Mammel M.K."/>
            <person name="McDermott P.F."/>
            <person name="Tartera C."/>
            <person name="White D.G."/>
            <person name="Leclerc J.E."/>
            <person name="Ravel J."/>
            <person name="Cebula T.A."/>
        </authorList>
    </citation>
    <scope>NUCLEOTIDE SEQUENCE [LARGE SCALE GENOMIC DNA]</scope>
    <source>
        <strain>SL483</strain>
    </source>
</reference>